<name>SPXM4_ORYSI</name>
<organism>
    <name type="scientific">Oryza sativa subsp. indica</name>
    <name type="common">Rice</name>
    <dbReference type="NCBI Taxonomy" id="39946"/>
    <lineage>
        <taxon>Eukaryota</taxon>
        <taxon>Viridiplantae</taxon>
        <taxon>Streptophyta</taxon>
        <taxon>Embryophyta</taxon>
        <taxon>Tracheophyta</taxon>
        <taxon>Spermatophyta</taxon>
        <taxon>Magnoliopsida</taxon>
        <taxon>Liliopsida</taxon>
        <taxon>Poales</taxon>
        <taxon>Poaceae</taxon>
        <taxon>BOP clade</taxon>
        <taxon>Oryzoideae</taxon>
        <taxon>Oryzeae</taxon>
        <taxon>Oryzinae</taxon>
        <taxon>Oryza</taxon>
        <taxon>Oryza sativa</taxon>
    </lineage>
</organism>
<keyword id="KW-0472">Membrane</keyword>
<keyword id="KW-1185">Reference proteome</keyword>
<keyword id="KW-0812">Transmembrane</keyword>
<keyword id="KW-1133">Transmembrane helix</keyword>
<gene>
    <name type="ORF">OsI_32082</name>
</gene>
<sequence>MVNFSNKLTKDQIPGWEEYYFNYKMLKGRVNEYTEQTKEGTQYRRRVLKDFSKLLDDEIEKIVLFMIEQQGLIAARLEDLGKRRARLQDIPLLQEITELREDYRSVGLDLVTLLKFVELNANAVRKILKKFDERLGYKFTDYYVRSRSNHPYSQLQQVFRHVGIGAVVGALSRNLSDLEERQGSYLNIYDQHPLAIPKDPIIDLITATADKLTNSTNFLRFLGQHALIAQADSTAGTEDEQHVGEDKYHLMSLVLNLANTFLYMVNTYIVVPTADGYATSLGAAATACGAVIGSMAVAQVFSSVYFSAWSNRSYFRPLLFSSVVLLLGNVMYAMAFDLGSLTILLLGRVLCGMGSARAVNRRYISDCVPPRIRMQASAAFVSASALGMACGPALAGLLQTNFSLYGLTINQITLPGWIMAFGWLVYLIWLWISFQEPDLGPDAKDFYEGSSSSTSTRYMEQEKMEQGFTEHLLPSEQDEEDDNGDEEHNETLSSSTTTLRPASSVASAYTLLTPSVKVQLLIYFMLKYAMEILLAESSVVTGYYFGWDIGTVSVFLAVLGLSVLPVNAIVGTYISNMFEDRQILVASEMALLAGVMLSFKLTVEYTAAQYVCSAVLTFVSAEVVEGVNLSLLSRVMSARLSRGTYNGGLLSTEAGTVARVVADGTITAAGLLAGEGRLLNATLLPALLVCVASIAATLSTYNSLFY</sequence>
<evidence type="ECO:0000255" key="1"/>
<evidence type="ECO:0000255" key="2">
    <source>
        <dbReference type="PROSITE-ProRule" id="PRU00714"/>
    </source>
</evidence>
<evidence type="ECO:0000256" key="3">
    <source>
        <dbReference type="SAM" id="MobiDB-lite"/>
    </source>
</evidence>
<evidence type="ECO:0000305" key="4"/>
<feature type="chain" id="PRO_0000398576" description="SPX domain-containing membrane protein OsI_32082">
    <location>
        <begin position="1"/>
        <end position="706"/>
    </location>
</feature>
<feature type="transmembrane region" description="Helical" evidence="1">
    <location>
        <begin position="251"/>
        <end position="271"/>
    </location>
</feature>
<feature type="transmembrane region" description="Helical" evidence="1">
    <location>
        <begin position="281"/>
        <end position="301"/>
    </location>
</feature>
<feature type="transmembrane region" description="Helical" evidence="1">
    <location>
        <begin position="318"/>
        <end position="338"/>
    </location>
</feature>
<feature type="transmembrane region" description="Helical" evidence="1">
    <location>
        <begin position="340"/>
        <end position="359"/>
    </location>
</feature>
<feature type="transmembrane region" description="Helical" evidence="1">
    <location>
        <begin position="378"/>
        <end position="398"/>
    </location>
</feature>
<feature type="transmembrane region" description="Helical" evidence="1">
    <location>
        <begin position="414"/>
        <end position="434"/>
    </location>
</feature>
<feature type="transmembrane region" description="Helical" evidence="1">
    <location>
        <begin position="520"/>
        <end position="540"/>
    </location>
</feature>
<feature type="transmembrane region" description="Helical" evidence="1">
    <location>
        <begin position="554"/>
        <end position="574"/>
    </location>
</feature>
<feature type="transmembrane region" description="Helical" evidence="1">
    <location>
        <begin position="583"/>
        <end position="603"/>
    </location>
</feature>
<feature type="transmembrane region" description="Helical" evidence="1">
    <location>
        <begin position="611"/>
        <end position="631"/>
    </location>
</feature>
<feature type="transmembrane region" description="Helical" evidence="1">
    <location>
        <begin position="678"/>
        <end position="698"/>
    </location>
</feature>
<feature type="domain" description="SPX" evidence="2">
    <location>
        <begin position="2"/>
        <end position="145"/>
    </location>
</feature>
<feature type="region of interest" description="Disordered" evidence="3">
    <location>
        <begin position="475"/>
        <end position="498"/>
    </location>
</feature>
<feature type="compositionally biased region" description="Acidic residues" evidence="3">
    <location>
        <begin position="476"/>
        <end position="488"/>
    </location>
</feature>
<dbReference type="EMBL" id="CM000134">
    <property type="protein sequence ID" value="EEC84901.1"/>
    <property type="status" value="ALT_SEQ"/>
    <property type="molecule type" value="Genomic_DNA"/>
</dbReference>
<dbReference type="STRING" id="39946.B8BDK8"/>
<dbReference type="HOGENOM" id="CLU_025236_1_0_1"/>
<dbReference type="Proteomes" id="UP000007015">
    <property type="component" value="Chromosome 9"/>
</dbReference>
<dbReference type="GO" id="GO:0016020">
    <property type="term" value="C:membrane"/>
    <property type="evidence" value="ECO:0007669"/>
    <property type="project" value="UniProtKB-SubCell"/>
</dbReference>
<dbReference type="GO" id="GO:0022857">
    <property type="term" value="F:transmembrane transporter activity"/>
    <property type="evidence" value="ECO:0007669"/>
    <property type="project" value="InterPro"/>
</dbReference>
<dbReference type="CDD" id="cd14479">
    <property type="entry name" value="SPX-MFS_plant"/>
    <property type="match status" value="1"/>
</dbReference>
<dbReference type="Gene3D" id="1.20.1250.20">
    <property type="entry name" value="MFS general substrate transporter like domains"/>
    <property type="match status" value="1"/>
</dbReference>
<dbReference type="InterPro" id="IPR011701">
    <property type="entry name" value="MFS"/>
</dbReference>
<dbReference type="InterPro" id="IPR020846">
    <property type="entry name" value="MFS_dom"/>
</dbReference>
<dbReference type="InterPro" id="IPR051068">
    <property type="entry name" value="MFS_Domain-Containing_Protein"/>
</dbReference>
<dbReference type="InterPro" id="IPR036259">
    <property type="entry name" value="MFS_trans_sf"/>
</dbReference>
<dbReference type="InterPro" id="IPR004331">
    <property type="entry name" value="SPX_dom"/>
</dbReference>
<dbReference type="InterPro" id="IPR045264">
    <property type="entry name" value="SPXM_SPX_plant"/>
</dbReference>
<dbReference type="PANTHER" id="PTHR23510">
    <property type="entry name" value="INNER MEMBRANE TRANSPORT PROTEIN YAJR"/>
    <property type="match status" value="1"/>
</dbReference>
<dbReference type="PANTHER" id="PTHR23510:SF65">
    <property type="entry name" value="SPX DOMAIN-CONTAINING MEMBRANE PROTEIN OS09G0521800"/>
    <property type="match status" value="1"/>
</dbReference>
<dbReference type="Pfam" id="PF07690">
    <property type="entry name" value="MFS_1"/>
    <property type="match status" value="1"/>
</dbReference>
<dbReference type="SUPFAM" id="SSF103473">
    <property type="entry name" value="MFS general substrate transporter"/>
    <property type="match status" value="1"/>
</dbReference>
<dbReference type="PROSITE" id="PS50850">
    <property type="entry name" value="MFS"/>
    <property type="match status" value="1"/>
</dbReference>
<dbReference type="PROSITE" id="PS51382">
    <property type="entry name" value="SPX"/>
    <property type="match status" value="1"/>
</dbReference>
<proteinExistence type="inferred from homology"/>
<comment type="subcellular location">
    <subcellularLocation>
        <location evidence="4">Membrane</location>
        <topology evidence="4">Multi-pass membrane protein</topology>
    </subcellularLocation>
</comment>
<comment type="similarity">
    <text evidence="4">Belongs to the major facilitator superfamily.</text>
</comment>
<comment type="sequence caution" evidence="4">
    <conflict type="erroneous gene model prediction">
        <sequence resource="EMBL-CDS" id="EEC84901"/>
    </conflict>
</comment>
<comment type="sequence caution" evidence="4">
    <conflict type="frameshift">
        <sequence resource="EMBL-CDS" id="EEC84901"/>
    </conflict>
</comment>
<reference key="1">
    <citation type="journal article" date="2005" name="PLoS Biol.">
        <title>The genomes of Oryza sativa: a history of duplications.</title>
        <authorList>
            <person name="Yu J."/>
            <person name="Wang J."/>
            <person name="Lin W."/>
            <person name="Li S."/>
            <person name="Li H."/>
            <person name="Zhou J."/>
            <person name="Ni P."/>
            <person name="Dong W."/>
            <person name="Hu S."/>
            <person name="Zeng C."/>
            <person name="Zhang J."/>
            <person name="Zhang Y."/>
            <person name="Li R."/>
            <person name="Xu Z."/>
            <person name="Li S."/>
            <person name="Li X."/>
            <person name="Zheng H."/>
            <person name="Cong L."/>
            <person name="Lin L."/>
            <person name="Yin J."/>
            <person name="Geng J."/>
            <person name="Li G."/>
            <person name="Shi J."/>
            <person name="Liu J."/>
            <person name="Lv H."/>
            <person name="Li J."/>
            <person name="Wang J."/>
            <person name="Deng Y."/>
            <person name="Ran L."/>
            <person name="Shi X."/>
            <person name="Wang X."/>
            <person name="Wu Q."/>
            <person name="Li C."/>
            <person name="Ren X."/>
            <person name="Wang J."/>
            <person name="Wang X."/>
            <person name="Li D."/>
            <person name="Liu D."/>
            <person name="Zhang X."/>
            <person name="Ji Z."/>
            <person name="Zhao W."/>
            <person name="Sun Y."/>
            <person name="Zhang Z."/>
            <person name="Bao J."/>
            <person name="Han Y."/>
            <person name="Dong L."/>
            <person name="Ji J."/>
            <person name="Chen P."/>
            <person name="Wu S."/>
            <person name="Liu J."/>
            <person name="Xiao Y."/>
            <person name="Bu D."/>
            <person name="Tan J."/>
            <person name="Yang L."/>
            <person name="Ye C."/>
            <person name="Zhang J."/>
            <person name="Xu J."/>
            <person name="Zhou Y."/>
            <person name="Yu Y."/>
            <person name="Zhang B."/>
            <person name="Zhuang S."/>
            <person name="Wei H."/>
            <person name="Liu B."/>
            <person name="Lei M."/>
            <person name="Yu H."/>
            <person name="Li Y."/>
            <person name="Xu H."/>
            <person name="Wei S."/>
            <person name="He X."/>
            <person name="Fang L."/>
            <person name="Zhang Z."/>
            <person name="Zhang Y."/>
            <person name="Huang X."/>
            <person name="Su Z."/>
            <person name="Tong W."/>
            <person name="Li J."/>
            <person name="Tong Z."/>
            <person name="Li S."/>
            <person name="Ye J."/>
            <person name="Wang L."/>
            <person name="Fang L."/>
            <person name="Lei T."/>
            <person name="Chen C.-S."/>
            <person name="Chen H.-C."/>
            <person name="Xu Z."/>
            <person name="Li H."/>
            <person name="Huang H."/>
            <person name="Zhang F."/>
            <person name="Xu H."/>
            <person name="Li N."/>
            <person name="Zhao C."/>
            <person name="Li S."/>
            <person name="Dong L."/>
            <person name="Huang Y."/>
            <person name="Li L."/>
            <person name="Xi Y."/>
            <person name="Qi Q."/>
            <person name="Li W."/>
            <person name="Zhang B."/>
            <person name="Hu W."/>
            <person name="Zhang Y."/>
            <person name="Tian X."/>
            <person name="Jiao Y."/>
            <person name="Liang X."/>
            <person name="Jin J."/>
            <person name="Gao L."/>
            <person name="Zheng W."/>
            <person name="Hao B."/>
            <person name="Liu S.-M."/>
            <person name="Wang W."/>
            <person name="Yuan L."/>
            <person name="Cao M."/>
            <person name="McDermott J."/>
            <person name="Samudrala R."/>
            <person name="Wang J."/>
            <person name="Wong G.K.-S."/>
            <person name="Yang H."/>
        </authorList>
    </citation>
    <scope>NUCLEOTIDE SEQUENCE [LARGE SCALE GENOMIC DNA]</scope>
    <source>
        <strain>cv. 93-11</strain>
    </source>
</reference>
<protein>
    <recommendedName>
        <fullName>SPX domain-containing membrane protein OsI_32082</fullName>
    </recommendedName>
</protein>
<accession>B8BDK8</accession>